<gene>
    <name type="primary">SLC6A15</name>
    <name type="synonym">B0AT2</name>
</gene>
<accession>Q5R9C2</accession>
<reference key="1">
    <citation type="submission" date="2004-11" db="EMBL/GenBank/DDBJ databases">
        <authorList>
            <consortium name="The German cDNA consortium"/>
        </authorList>
    </citation>
    <scope>NUCLEOTIDE SEQUENCE [LARGE SCALE MRNA]</scope>
    <source>
        <tissue>Brain cortex</tissue>
    </source>
</reference>
<comment type="function">
    <text evidence="2">Functions as a sodium-dependent neutral amino acid transporter. Exhibits preference for the branched-chain amino acids, particularly leucine, valine and isoleucine and methionine. Can also transport low-affinity substrates such as alanine, phenylalanine, glutamine and pipecolic acid. Mediates the saturable, pH-sensitive and electrogenic cotransport of proline and sodium ions with a stoichiometry of 1:1. May have a role as transporter for neurotransmitter precursors into neurons. In contrast to other members of the neurotransmitter transporter family, does not appear to be chloride-dependent.</text>
</comment>
<comment type="catalytic activity">
    <reaction evidence="2">
        <text>L-leucine(in) + Na(+)(in) = L-leucine(out) + Na(+)(out)</text>
        <dbReference type="Rhea" id="RHEA:29263"/>
        <dbReference type="ChEBI" id="CHEBI:29101"/>
        <dbReference type="ChEBI" id="CHEBI:57427"/>
    </reaction>
</comment>
<comment type="catalytic activity">
    <reaction evidence="2">
        <text>L-isoleucine(in) + Na(+)(in) = L-isoleucine(out) + Na(+)(out)</text>
        <dbReference type="Rhea" id="RHEA:29275"/>
        <dbReference type="ChEBI" id="CHEBI:29101"/>
        <dbReference type="ChEBI" id="CHEBI:58045"/>
    </reaction>
</comment>
<comment type="catalytic activity">
    <reaction evidence="2">
        <text>L-methionine(in) + Na(+)(in) = L-methionine(out) + Na(+)(out)</text>
        <dbReference type="Rhea" id="RHEA:68240"/>
        <dbReference type="ChEBI" id="CHEBI:29101"/>
        <dbReference type="ChEBI" id="CHEBI:57844"/>
    </reaction>
</comment>
<comment type="catalytic activity">
    <reaction evidence="2">
        <text>L-proline(in) + Na(+)(in) = L-proline(out) + Na(+)(out)</text>
        <dbReference type="Rhea" id="RHEA:28967"/>
        <dbReference type="ChEBI" id="CHEBI:29101"/>
        <dbReference type="ChEBI" id="CHEBI:60039"/>
    </reaction>
</comment>
<comment type="catalytic activity">
    <reaction evidence="2">
        <text>L-alanine(in) + Na(+)(in) = L-alanine(out) + Na(+)(out)</text>
        <dbReference type="Rhea" id="RHEA:29283"/>
        <dbReference type="ChEBI" id="CHEBI:29101"/>
        <dbReference type="ChEBI" id="CHEBI:57972"/>
    </reaction>
</comment>
<comment type="catalytic activity">
    <reaction evidence="2">
        <text>L-asparagine(in) + Na(+)(in) = L-asparagine(out) + Na(+)(out)</text>
        <dbReference type="Rhea" id="RHEA:71383"/>
        <dbReference type="ChEBI" id="CHEBI:29101"/>
        <dbReference type="ChEBI" id="CHEBI:58048"/>
    </reaction>
</comment>
<comment type="catalytic activity">
    <reaction evidence="2">
        <text>L-valine(in) + Na(+)(in) = L-valine(out) + Na(+)(out)</text>
        <dbReference type="Rhea" id="RHEA:29267"/>
        <dbReference type="ChEBI" id="CHEBI:29101"/>
        <dbReference type="ChEBI" id="CHEBI:57762"/>
    </reaction>
</comment>
<comment type="catalytic activity">
    <reaction evidence="2">
        <text>L-cysteine(in) + Na(+)(in) = L-cysteine(out) + Na(+)(out)</text>
        <dbReference type="Rhea" id="RHEA:68232"/>
        <dbReference type="ChEBI" id="CHEBI:29101"/>
        <dbReference type="ChEBI" id="CHEBI:35235"/>
    </reaction>
</comment>
<comment type="catalytic activity">
    <reaction evidence="2">
        <text>L-glutamine(in) + Na(+)(in) = L-glutamine(out) + Na(+)(out)</text>
        <dbReference type="Rhea" id="RHEA:68236"/>
        <dbReference type="ChEBI" id="CHEBI:29101"/>
        <dbReference type="ChEBI" id="CHEBI:58359"/>
    </reaction>
</comment>
<comment type="catalytic activity">
    <reaction evidence="2">
        <text>L-serine(in) + Na(+)(in) = L-serine(out) + Na(+)(out)</text>
        <dbReference type="Rhea" id="RHEA:29575"/>
        <dbReference type="ChEBI" id="CHEBI:29101"/>
        <dbReference type="ChEBI" id="CHEBI:33384"/>
    </reaction>
</comment>
<comment type="catalytic activity">
    <reaction evidence="2">
        <text>L-threonine(in) + Na(+)(in) = L-threonine(out) + Na(+)(out)</text>
        <dbReference type="Rhea" id="RHEA:69999"/>
        <dbReference type="ChEBI" id="CHEBI:29101"/>
        <dbReference type="ChEBI" id="CHEBI:57926"/>
    </reaction>
</comment>
<comment type="catalytic activity">
    <reaction evidence="1">
        <text>L-pipecolate(in) + Na(+)(in) = L-pipecolate(out) + Na(+)(out)</text>
        <dbReference type="Rhea" id="RHEA:71387"/>
        <dbReference type="ChEBI" id="CHEBI:29101"/>
        <dbReference type="ChEBI" id="CHEBI:61185"/>
    </reaction>
</comment>
<comment type="catalytic activity">
    <reaction evidence="1">
        <text>L-phenylalanine(in) + Na(+)(in) = L-phenylalanine(out) + Na(+)(out)</text>
        <dbReference type="Rhea" id="RHEA:68244"/>
        <dbReference type="ChEBI" id="CHEBI:29101"/>
        <dbReference type="ChEBI" id="CHEBI:58095"/>
    </reaction>
</comment>
<comment type="subcellular location">
    <subcellularLocation>
        <location evidence="2">Membrane</location>
        <topology evidence="2">Multi-pass membrane protein</topology>
    </subcellularLocation>
</comment>
<comment type="similarity">
    <text evidence="5">Belongs to the sodium:neurotransmitter symporter (SNF) (TC 2.A.22) family. SLC6A15 subfamily.</text>
</comment>
<comment type="sequence caution" evidence="5">
    <conflict type="erroneous initiation">
        <sequence resource="EMBL-CDS" id="CAH91638"/>
    </conflict>
    <text>Extended N-terminus.</text>
</comment>
<organism>
    <name type="scientific">Pongo abelii</name>
    <name type="common">Sumatran orangutan</name>
    <name type="synonym">Pongo pygmaeus abelii</name>
    <dbReference type="NCBI Taxonomy" id="9601"/>
    <lineage>
        <taxon>Eukaryota</taxon>
        <taxon>Metazoa</taxon>
        <taxon>Chordata</taxon>
        <taxon>Craniata</taxon>
        <taxon>Vertebrata</taxon>
        <taxon>Euteleostomi</taxon>
        <taxon>Mammalia</taxon>
        <taxon>Eutheria</taxon>
        <taxon>Euarchontoglires</taxon>
        <taxon>Primates</taxon>
        <taxon>Haplorrhini</taxon>
        <taxon>Catarrhini</taxon>
        <taxon>Hominidae</taxon>
        <taxon>Pongo</taxon>
    </lineage>
</organism>
<feature type="chain" id="PRO_0000406988" description="Sodium-dependent neutral amino acid transporter B(0)AT2">
    <location>
        <begin position="1"/>
        <end position="730"/>
    </location>
</feature>
<feature type="topological domain" description="Extracellular" evidence="3">
    <location>
        <begin position="1"/>
        <end position="70"/>
    </location>
</feature>
<feature type="transmembrane region" description="Helical; Name=1" evidence="3">
    <location>
        <begin position="71"/>
        <end position="91"/>
    </location>
</feature>
<feature type="transmembrane region" description="Helical; Name=2" evidence="3">
    <location>
        <begin position="97"/>
        <end position="117"/>
    </location>
</feature>
<feature type="transmembrane region" description="Helical; Name=3" evidence="3">
    <location>
        <begin position="149"/>
        <end position="169"/>
    </location>
</feature>
<feature type="topological domain" description="Cytoplasmic" evidence="3">
    <location>
        <begin position="170"/>
        <end position="223"/>
    </location>
</feature>
<feature type="transmembrane region" description="Helical; Name=4" evidence="3">
    <location>
        <begin position="224"/>
        <end position="244"/>
    </location>
</feature>
<feature type="transmembrane region" description="Helical; Name=5" evidence="3">
    <location>
        <begin position="253"/>
        <end position="273"/>
    </location>
</feature>
<feature type="transmembrane region" description="Helical; Name=6" evidence="3">
    <location>
        <begin position="302"/>
        <end position="322"/>
    </location>
</feature>
<feature type="transmembrane region" description="Helical; Name=7" evidence="3">
    <location>
        <begin position="335"/>
        <end position="355"/>
    </location>
</feature>
<feature type="topological domain" description="Cytoplasmic" evidence="3">
    <location>
        <begin position="356"/>
        <end position="458"/>
    </location>
</feature>
<feature type="transmembrane region" description="Helical; Name=8" evidence="3">
    <location>
        <begin position="459"/>
        <end position="479"/>
    </location>
</feature>
<feature type="transmembrane region" description="Helical; Name=9" evidence="3">
    <location>
        <begin position="494"/>
        <end position="514"/>
    </location>
</feature>
<feature type="transmembrane region" description="Helical; Name=10" evidence="3">
    <location>
        <begin position="530"/>
        <end position="550"/>
    </location>
</feature>
<feature type="transmembrane region" description="Helical; Name=11" evidence="3">
    <location>
        <begin position="575"/>
        <end position="595"/>
    </location>
</feature>
<feature type="transmembrane region" description="Helical; Name=12" evidence="3">
    <location>
        <begin position="619"/>
        <end position="639"/>
    </location>
</feature>
<feature type="topological domain" description="Extracellular" evidence="3">
    <location>
        <begin position="640"/>
        <end position="730"/>
    </location>
</feature>
<feature type="region of interest" description="Disordered" evidence="4">
    <location>
        <begin position="1"/>
        <end position="24"/>
    </location>
</feature>
<feature type="modified residue" description="Phosphoserine" evidence="2">
    <location>
        <position position="25"/>
    </location>
</feature>
<feature type="modified residue" description="Phosphoserine" evidence="2">
    <location>
        <position position="55"/>
    </location>
</feature>
<feature type="modified residue" description="Phosphoserine" evidence="2">
    <location>
        <position position="687"/>
    </location>
</feature>
<feature type="modified residue" description="Phosphoserine" evidence="2">
    <location>
        <position position="699"/>
    </location>
</feature>
<feature type="modified residue" description="Phosphoserine" evidence="2">
    <location>
        <position position="701"/>
    </location>
</feature>
<feature type="glycosylation site" description="N-linked (GlcNAc...) asparagine" evidence="3">
    <location>
        <position position="276"/>
    </location>
</feature>
<proteinExistence type="evidence at transcript level"/>
<evidence type="ECO:0000250" key="1">
    <source>
        <dbReference type="UniProtKB" id="Q8BG16"/>
    </source>
</evidence>
<evidence type="ECO:0000250" key="2">
    <source>
        <dbReference type="UniProtKB" id="Q9H2J7"/>
    </source>
</evidence>
<evidence type="ECO:0000255" key="3"/>
<evidence type="ECO:0000256" key="4">
    <source>
        <dbReference type="SAM" id="MobiDB-lite"/>
    </source>
</evidence>
<evidence type="ECO:0000305" key="5"/>
<protein>
    <recommendedName>
        <fullName>Sodium-dependent neutral amino acid transporter B(0)AT2</fullName>
    </recommendedName>
    <alternativeName>
        <fullName>Sodium- and chloride-dependent neurotransmitter transporter NTT73</fullName>
    </alternativeName>
    <alternativeName>
        <fullName>Solute carrier family 6 member 15</fullName>
    </alternativeName>
    <alternativeName>
        <fullName>Transporter v7-3</fullName>
    </alternativeName>
</protein>
<keyword id="KW-0029">Amino-acid transport</keyword>
<keyword id="KW-0325">Glycoprotein</keyword>
<keyword id="KW-0406">Ion transport</keyword>
<keyword id="KW-0472">Membrane</keyword>
<keyword id="KW-0532">Neurotransmitter transport</keyword>
<keyword id="KW-0597">Phosphoprotein</keyword>
<keyword id="KW-1185">Reference proteome</keyword>
<keyword id="KW-0915">Sodium</keyword>
<keyword id="KW-0739">Sodium transport</keyword>
<keyword id="KW-0769">Symport</keyword>
<keyword id="KW-0812">Transmembrane</keyword>
<keyword id="KW-1133">Transmembrane helix</keyword>
<keyword id="KW-0813">Transport</keyword>
<name>S6A15_PONAB</name>
<sequence length="730" mass="81708">MPKNSKVVKRELDDDVTESVKDLLSNEDSADDAFKTSELIVDGQEEKDTDVEEGSEVEDERPAWSSKLQYILAQVGFSVGLGNVWRFPYLCQKNGGGAYLLPYLILLMVIGIPLFFLELSVGQRIRRGSIGVWNYISPKLGGIGFASCVVCYFVALYYNVIIGWSLFYFSQSFQQPLPWDQCPLVKNASHTFVEPECEQSSATTYYWYREALNISSSISESGGLNWKMTICLLAAWVMVCLAMIKGIQSSGKIIYFSSLFPYVVLICFLIRALLLNGSIDGIRHMFTPKLEIMLEPKVWREAATQVFFALGLGFGGVIAFSSYNKRDNNCHFDAVLVSFINFFTSVLATLVVFAVLGFKANVINEKCITQNSQTIMKFLKMGNISQDIIPHHINLSAVTAEDYHLVYDIIQKVKEEEFPALHLNSCKIEEELNKAVQGTGLAFIAFTEAMTHFPASPFWSVMFFLMLVNLGLGSMFGTIEGIVTPIVDTFKVRKEILTVICCLLAFCIGLIFVQRSGNYFVTMFDDYSATLPLLIVVILENIAVCFVYGIDKFMEDLKDMLGFAPSRYYYYMWKYVSPLMLLSLLIASVVNMGLSPPGYNAWIEDKASEEFLSYPTWGLVVCVSLVVFAVLPVPVVFIVRRFNLIDDSSGNLASVTYKRGRVLNEPVNLEGDDTSLIHGKISSEMPSPNFGKNIYRKQSGSPTLDTAPNGRYGIGYLMADIMPDMPESDL</sequence>
<dbReference type="EMBL" id="CR859467">
    <property type="protein sequence ID" value="CAH91638.1"/>
    <property type="status" value="ALT_INIT"/>
    <property type="molecule type" value="mRNA"/>
</dbReference>
<dbReference type="RefSeq" id="NP_001127446.1">
    <property type="nucleotide sequence ID" value="NM_001133974.1"/>
</dbReference>
<dbReference type="SMR" id="Q5R9C2"/>
<dbReference type="FunCoup" id="Q5R9C2">
    <property type="interactions" value="1018"/>
</dbReference>
<dbReference type="STRING" id="9601.ENSPPYP00000005482"/>
<dbReference type="GlyCosmos" id="Q5R9C2">
    <property type="glycosylation" value="1 site, No reported glycans"/>
</dbReference>
<dbReference type="GeneID" id="100174517"/>
<dbReference type="KEGG" id="pon:100174517"/>
<dbReference type="CTD" id="55117"/>
<dbReference type="eggNOG" id="KOG3659">
    <property type="taxonomic scope" value="Eukaryota"/>
</dbReference>
<dbReference type="InParanoid" id="Q5R9C2"/>
<dbReference type="OrthoDB" id="6581954at2759"/>
<dbReference type="Proteomes" id="UP000001595">
    <property type="component" value="Unplaced"/>
</dbReference>
<dbReference type="GO" id="GO:0016020">
    <property type="term" value="C:membrane"/>
    <property type="evidence" value="ECO:0000250"/>
    <property type="project" value="UniProtKB"/>
</dbReference>
<dbReference type="GO" id="GO:0005886">
    <property type="term" value="C:plasma membrane"/>
    <property type="evidence" value="ECO:0007669"/>
    <property type="project" value="InterPro"/>
</dbReference>
<dbReference type="GO" id="GO:0015657">
    <property type="term" value="F:branched-chain amino acid:sodium symporter activity"/>
    <property type="evidence" value="ECO:0000250"/>
    <property type="project" value="UniProtKB"/>
</dbReference>
<dbReference type="GO" id="GO:0005295">
    <property type="term" value="F:neutral L-amino acid:sodium symporter activity"/>
    <property type="evidence" value="ECO:0000250"/>
    <property type="project" value="UniProtKB"/>
</dbReference>
<dbReference type="GO" id="GO:0005298">
    <property type="term" value="F:proline:sodium symporter activity"/>
    <property type="evidence" value="ECO:0000250"/>
    <property type="project" value="UniProtKB"/>
</dbReference>
<dbReference type="GO" id="GO:0015820">
    <property type="term" value="P:L-leucine transport"/>
    <property type="evidence" value="ECO:0000250"/>
    <property type="project" value="UniProtKB"/>
</dbReference>
<dbReference type="GO" id="GO:0006836">
    <property type="term" value="P:neurotransmitter transport"/>
    <property type="evidence" value="ECO:0007669"/>
    <property type="project" value="UniProtKB-KW"/>
</dbReference>
<dbReference type="GO" id="GO:0015804">
    <property type="term" value="P:neutral amino acid transport"/>
    <property type="evidence" value="ECO:0000250"/>
    <property type="project" value="UniProtKB"/>
</dbReference>
<dbReference type="GO" id="GO:0015824">
    <property type="term" value="P:proline transport"/>
    <property type="evidence" value="ECO:0000250"/>
    <property type="project" value="UniProtKB"/>
</dbReference>
<dbReference type="CDD" id="cd11522">
    <property type="entry name" value="SLC6sbd_SBAT1"/>
    <property type="match status" value="1"/>
</dbReference>
<dbReference type="InterPro" id="IPR042934">
    <property type="entry name" value="B(0)AT2"/>
</dbReference>
<dbReference type="InterPro" id="IPR000175">
    <property type="entry name" value="Na/ntran_symport"/>
</dbReference>
<dbReference type="InterPro" id="IPR002438">
    <property type="entry name" value="Neutral_aa_SLC6"/>
</dbReference>
<dbReference type="InterPro" id="IPR037272">
    <property type="entry name" value="SNS_sf"/>
</dbReference>
<dbReference type="NCBIfam" id="NF037979">
    <property type="entry name" value="Na_transp"/>
    <property type="match status" value="1"/>
</dbReference>
<dbReference type="PANTHER" id="PTHR11616:SF101">
    <property type="entry name" value="SODIUM-DEPENDENT NEUTRAL AMINO ACID TRANSPORTER B(0)AT2"/>
    <property type="match status" value="1"/>
</dbReference>
<dbReference type="PANTHER" id="PTHR11616">
    <property type="entry name" value="SODIUM/CHLORIDE DEPENDENT TRANSPORTER"/>
    <property type="match status" value="1"/>
</dbReference>
<dbReference type="Pfam" id="PF00209">
    <property type="entry name" value="SNF"/>
    <property type="match status" value="1"/>
</dbReference>
<dbReference type="PRINTS" id="PR00176">
    <property type="entry name" value="NANEUSMPORT"/>
</dbReference>
<dbReference type="PRINTS" id="PR01206">
    <property type="entry name" value="ORPHTRNSPORT"/>
</dbReference>
<dbReference type="SUPFAM" id="SSF161070">
    <property type="entry name" value="SNF-like"/>
    <property type="match status" value="1"/>
</dbReference>
<dbReference type="PROSITE" id="PS00610">
    <property type="entry name" value="NA_NEUROTRAN_SYMP_1"/>
    <property type="match status" value="1"/>
</dbReference>
<dbReference type="PROSITE" id="PS00754">
    <property type="entry name" value="NA_NEUROTRAN_SYMP_2"/>
    <property type="match status" value="1"/>
</dbReference>
<dbReference type="PROSITE" id="PS50267">
    <property type="entry name" value="NA_NEUROTRAN_SYMP_3"/>
    <property type="match status" value="1"/>
</dbReference>